<keyword id="KW-0106">Calcium</keyword>
<keyword id="KW-0130">Cell adhesion</keyword>
<keyword id="KW-0965">Cell junction</keyword>
<keyword id="KW-1003">Cell membrane</keyword>
<keyword id="KW-0165">Cleavage on pair of basic residues</keyword>
<keyword id="KW-0963">Cytoplasm</keyword>
<keyword id="KW-0903">Direct protein sequencing</keyword>
<keyword id="KW-0967">Endosome</keyword>
<keyword id="KW-0325">Glycoprotein</keyword>
<keyword id="KW-0333">Golgi apparatus</keyword>
<keyword id="KW-0472">Membrane</keyword>
<keyword id="KW-0479">Metal-binding</keyword>
<keyword id="KW-1185">Reference proteome</keyword>
<keyword id="KW-0677">Repeat</keyword>
<keyword id="KW-0732">Signal</keyword>
<keyword id="KW-0812">Transmembrane</keyword>
<keyword id="KW-1133">Transmembrane helix</keyword>
<dbReference type="EMBL" id="M22190">
    <property type="protein sequence ID" value="AAA82572.1"/>
    <property type="molecule type" value="Genomic_DNA"/>
</dbReference>
<dbReference type="EMBL" id="M22180">
    <property type="protein sequence ID" value="AAA82572.1"/>
    <property type="status" value="JOINED"/>
    <property type="molecule type" value="Genomic_DNA"/>
</dbReference>
<dbReference type="EMBL" id="M22181">
    <property type="protein sequence ID" value="AAA82572.1"/>
    <property type="status" value="JOINED"/>
    <property type="molecule type" value="Genomic_DNA"/>
</dbReference>
<dbReference type="EMBL" id="M22182">
    <property type="protein sequence ID" value="AAA82572.1"/>
    <property type="status" value="JOINED"/>
    <property type="molecule type" value="Genomic_DNA"/>
</dbReference>
<dbReference type="EMBL" id="M22186">
    <property type="protein sequence ID" value="AAA82572.1"/>
    <property type="status" value="JOINED"/>
    <property type="molecule type" value="Genomic_DNA"/>
</dbReference>
<dbReference type="EMBL" id="M22183">
    <property type="protein sequence ID" value="AAA82572.1"/>
    <property type="status" value="JOINED"/>
    <property type="molecule type" value="Genomic_DNA"/>
</dbReference>
<dbReference type="EMBL" id="M22194">
    <property type="protein sequence ID" value="AAA82572.1"/>
    <property type="status" value="JOINED"/>
    <property type="molecule type" value="Genomic_DNA"/>
</dbReference>
<dbReference type="EMBL" id="M22184">
    <property type="protein sequence ID" value="AAA82572.1"/>
    <property type="status" value="JOINED"/>
    <property type="molecule type" value="Genomic_DNA"/>
</dbReference>
<dbReference type="EMBL" id="M22185">
    <property type="protein sequence ID" value="AAA82572.1"/>
    <property type="status" value="JOINED"/>
    <property type="molecule type" value="Genomic_DNA"/>
</dbReference>
<dbReference type="EMBL" id="M22189">
    <property type="protein sequence ID" value="AAA82572.1"/>
    <property type="status" value="JOINED"/>
    <property type="molecule type" value="Genomic_DNA"/>
</dbReference>
<dbReference type="EMBL" id="M22193">
    <property type="protein sequence ID" value="AAA82572.1"/>
    <property type="status" value="JOINED"/>
    <property type="molecule type" value="Genomic_DNA"/>
</dbReference>
<dbReference type="EMBL" id="M22187">
    <property type="protein sequence ID" value="AAA82572.1"/>
    <property type="status" value="JOINED"/>
    <property type="molecule type" value="Genomic_DNA"/>
</dbReference>
<dbReference type="EMBL" id="M22192">
    <property type="protein sequence ID" value="AAA82572.1"/>
    <property type="status" value="JOINED"/>
    <property type="molecule type" value="Genomic_DNA"/>
</dbReference>
<dbReference type="EMBL" id="M22191">
    <property type="protein sequence ID" value="AAA82572.1"/>
    <property type="status" value="JOINED"/>
    <property type="molecule type" value="Genomic_DNA"/>
</dbReference>
<dbReference type="EMBL" id="M22195">
    <property type="protein sequence ID" value="AAA82572.1"/>
    <property type="status" value="JOINED"/>
    <property type="molecule type" value="Genomic_DNA"/>
</dbReference>
<dbReference type="EMBL" id="M16260">
    <property type="protein sequence ID" value="AAA82573.1"/>
    <property type="molecule type" value="mRNA"/>
</dbReference>
<dbReference type="PIR" id="A30201">
    <property type="entry name" value="IJCHCL"/>
</dbReference>
<dbReference type="RefSeq" id="NP_001034347.2">
    <property type="nucleotide sequence ID" value="NM_001039258.2"/>
</dbReference>
<dbReference type="SMR" id="P08641"/>
<dbReference type="FunCoup" id="P08641">
    <property type="interactions" value="210"/>
</dbReference>
<dbReference type="IntAct" id="P08641">
    <property type="interactions" value="2"/>
</dbReference>
<dbReference type="STRING" id="9031.ENSGALP00000000855"/>
<dbReference type="GlyCosmos" id="P08641">
    <property type="glycosylation" value="4 sites, No reported glycans"/>
</dbReference>
<dbReference type="GlyGen" id="P08641">
    <property type="glycosylation" value="6 sites"/>
</dbReference>
<dbReference type="iPTMnet" id="P08641"/>
<dbReference type="PaxDb" id="9031-ENSGALP00000000855"/>
<dbReference type="GeneID" id="415860"/>
<dbReference type="KEGG" id="gga:415860"/>
<dbReference type="CTD" id="999"/>
<dbReference type="VEuPathDB" id="HostDB:geneid_415860"/>
<dbReference type="eggNOG" id="KOG3594">
    <property type="taxonomic scope" value="Eukaryota"/>
</dbReference>
<dbReference type="InParanoid" id="P08641"/>
<dbReference type="OrthoDB" id="6079678at2759"/>
<dbReference type="PhylomeDB" id="P08641"/>
<dbReference type="PRO" id="PR:P08641"/>
<dbReference type="Proteomes" id="UP000000539">
    <property type="component" value="Unassembled WGS sequence"/>
</dbReference>
<dbReference type="GO" id="GO:0005912">
    <property type="term" value="C:adherens junction"/>
    <property type="evidence" value="ECO:0000318"/>
    <property type="project" value="GO_Central"/>
</dbReference>
<dbReference type="GO" id="GO:0043296">
    <property type="term" value="C:apical junction complex"/>
    <property type="evidence" value="ECO:0000318"/>
    <property type="project" value="GO_Central"/>
</dbReference>
<dbReference type="GO" id="GO:0016342">
    <property type="term" value="C:catenin complex"/>
    <property type="evidence" value="ECO:0000318"/>
    <property type="project" value="GO_Central"/>
</dbReference>
<dbReference type="GO" id="GO:0005911">
    <property type="term" value="C:cell-cell junction"/>
    <property type="evidence" value="ECO:0000250"/>
    <property type="project" value="UniProtKB"/>
</dbReference>
<dbReference type="GO" id="GO:0005737">
    <property type="term" value="C:cytoplasm"/>
    <property type="evidence" value="ECO:0000318"/>
    <property type="project" value="GO_Central"/>
</dbReference>
<dbReference type="GO" id="GO:0030057">
    <property type="term" value="C:desmosome"/>
    <property type="evidence" value="ECO:0007669"/>
    <property type="project" value="UniProtKB-SubCell"/>
</dbReference>
<dbReference type="GO" id="GO:0005768">
    <property type="term" value="C:endosome"/>
    <property type="evidence" value="ECO:0007669"/>
    <property type="project" value="UniProtKB-SubCell"/>
</dbReference>
<dbReference type="GO" id="GO:0016600">
    <property type="term" value="C:flotillin complex"/>
    <property type="evidence" value="ECO:0000318"/>
    <property type="project" value="GO_Central"/>
</dbReference>
<dbReference type="GO" id="GO:0005794">
    <property type="term" value="C:Golgi apparatus"/>
    <property type="evidence" value="ECO:0007669"/>
    <property type="project" value="UniProtKB-SubCell"/>
</dbReference>
<dbReference type="GO" id="GO:0008013">
    <property type="term" value="F:beta-catenin binding"/>
    <property type="evidence" value="ECO:0000318"/>
    <property type="project" value="GO_Central"/>
</dbReference>
<dbReference type="GO" id="GO:0045296">
    <property type="term" value="F:cadherin binding"/>
    <property type="evidence" value="ECO:0000318"/>
    <property type="project" value="GO_Central"/>
</dbReference>
<dbReference type="GO" id="GO:0005509">
    <property type="term" value="F:calcium ion binding"/>
    <property type="evidence" value="ECO:0007669"/>
    <property type="project" value="InterPro"/>
</dbReference>
<dbReference type="GO" id="GO:0034332">
    <property type="term" value="P:adherens junction organization"/>
    <property type="evidence" value="ECO:0000318"/>
    <property type="project" value="GO_Central"/>
</dbReference>
<dbReference type="GO" id="GO:0016339">
    <property type="term" value="P:calcium-dependent cell-cell adhesion via plasma membrane cell adhesion molecules"/>
    <property type="evidence" value="ECO:0000318"/>
    <property type="project" value="GO_Central"/>
</dbReference>
<dbReference type="GO" id="GO:0016477">
    <property type="term" value="P:cell migration"/>
    <property type="evidence" value="ECO:0000318"/>
    <property type="project" value="GO_Central"/>
</dbReference>
<dbReference type="GO" id="GO:0000902">
    <property type="term" value="P:cell morphogenesis"/>
    <property type="evidence" value="ECO:0000318"/>
    <property type="project" value="GO_Central"/>
</dbReference>
<dbReference type="GO" id="GO:0044331">
    <property type="term" value="P:cell-cell adhesion mediated by cadherin"/>
    <property type="evidence" value="ECO:0000318"/>
    <property type="project" value="GO_Central"/>
</dbReference>
<dbReference type="GO" id="GO:0007043">
    <property type="term" value="P:cell-cell junction assembly"/>
    <property type="evidence" value="ECO:0000318"/>
    <property type="project" value="GO_Central"/>
</dbReference>
<dbReference type="GO" id="GO:0007156">
    <property type="term" value="P:homophilic cell adhesion via plasma membrane adhesion molecules"/>
    <property type="evidence" value="ECO:0007669"/>
    <property type="project" value="InterPro"/>
</dbReference>
<dbReference type="GO" id="GO:0007416">
    <property type="term" value="P:synapse assembly"/>
    <property type="evidence" value="ECO:0000318"/>
    <property type="project" value="GO_Central"/>
</dbReference>
<dbReference type="CDD" id="cd00031">
    <property type="entry name" value="CA_like"/>
    <property type="match status" value="1"/>
</dbReference>
<dbReference type="CDD" id="cd11304">
    <property type="entry name" value="Cadherin_repeat"/>
    <property type="match status" value="3"/>
</dbReference>
<dbReference type="FunFam" id="2.60.40.60:FF:000011">
    <property type="entry name" value="Cadherin 1"/>
    <property type="match status" value="1"/>
</dbReference>
<dbReference type="FunFam" id="2.60.40.60:FF:000191">
    <property type="entry name" value="Cadherin 1"/>
    <property type="match status" value="1"/>
</dbReference>
<dbReference type="FunFam" id="2.60.40.60:FF:000019">
    <property type="entry name" value="Cadherin 2"/>
    <property type="match status" value="1"/>
</dbReference>
<dbReference type="FunFam" id="2.60.40.60:FF:000022">
    <property type="entry name" value="Cadherin 2"/>
    <property type="match status" value="1"/>
</dbReference>
<dbReference type="FunFam" id="2.60.40.60:FF:000027">
    <property type="entry name" value="Cadherin 2"/>
    <property type="match status" value="1"/>
</dbReference>
<dbReference type="FunFam" id="4.10.900.10:FF:000001">
    <property type="entry name" value="Cadherin 2"/>
    <property type="match status" value="1"/>
</dbReference>
<dbReference type="FunFam" id="2.60.40.60:FF:000031">
    <property type="entry name" value="Cadherin 3"/>
    <property type="match status" value="1"/>
</dbReference>
<dbReference type="Gene3D" id="2.60.40.60">
    <property type="entry name" value="Cadherins"/>
    <property type="match status" value="6"/>
</dbReference>
<dbReference type="Gene3D" id="4.10.900.10">
    <property type="entry name" value="TCF3-CBD (Catenin binding domain)"/>
    <property type="match status" value="1"/>
</dbReference>
<dbReference type="InterPro" id="IPR039808">
    <property type="entry name" value="Cadherin"/>
</dbReference>
<dbReference type="InterPro" id="IPR002126">
    <property type="entry name" value="Cadherin-like_dom"/>
</dbReference>
<dbReference type="InterPro" id="IPR015919">
    <property type="entry name" value="Cadherin-like_sf"/>
</dbReference>
<dbReference type="InterPro" id="IPR020894">
    <property type="entry name" value="Cadherin_CS"/>
</dbReference>
<dbReference type="InterPro" id="IPR014868">
    <property type="entry name" value="Cadherin_pro_dom"/>
</dbReference>
<dbReference type="InterPro" id="IPR000233">
    <property type="entry name" value="Cadherin_Y-type_LIR"/>
</dbReference>
<dbReference type="InterPro" id="IPR027397">
    <property type="entry name" value="Catenin-bd_sf"/>
</dbReference>
<dbReference type="PANTHER" id="PTHR24027:SF319">
    <property type="entry name" value="CADHERIN-1"/>
    <property type="match status" value="1"/>
</dbReference>
<dbReference type="PANTHER" id="PTHR24027">
    <property type="entry name" value="CADHERIN-23"/>
    <property type="match status" value="1"/>
</dbReference>
<dbReference type="Pfam" id="PF01049">
    <property type="entry name" value="CADH_Y-type_LIR"/>
    <property type="match status" value="1"/>
</dbReference>
<dbReference type="Pfam" id="PF00028">
    <property type="entry name" value="Cadherin"/>
    <property type="match status" value="5"/>
</dbReference>
<dbReference type="Pfam" id="PF08758">
    <property type="entry name" value="Cadherin_pro"/>
    <property type="match status" value="1"/>
</dbReference>
<dbReference type="PRINTS" id="PR00205">
    <property type="entry name" value="CADHERIN"/>
</dbReference>
<dbReference type="SMART" id="SM00112">
    <property type="entry name" value="CA"/>
    <property type="match status" value="4"/>
</dbReference>
<dbReference type="SMART" id="SM01055">
    <property type="entry name" value="Cadherin_pro"/>
    <property type="match status" value="1"/>
</dbReference>
<dbReference type="SUPFAM" id="SSF49313">
    <property type="entry name" value="Cadherin-like"/>
    <property type="match status" value="6"/>
</dbReference>
<dbReference type="PROSITE" id="PS00232">
    <property type="entry name" value="CADHERIN_1"/>
    <property type="match status" value="3"/>
</dbReference>
<dbReference type="PROSITE" id="PS50268">
    <property type="entry name" value="CADHERIN_2"/>
    <property type="match status" value="5"/>
</dbReference>
<protein>
    <recommendedName>
        <fullName>Cadherin-1</fullName>
    </recommendedName>
    <alternativeName>
        <fullName>Epithelial cadherin</fullName>
        <shortName>E-cadherin</shortName>
    </alternativeName>
    <alternativeName>
        <fullName evidence="10">Liver cell adhesion molecule</fullName>
        <shortName evidence="10">L-CAM</shortName>
    </alternativeName>
</protein>
<accession>P08641</accession>
<gene>
    <name type="primary">CDH1</name>
</gene>
<reference key="1">
    <citation type="journal article" date="1988" name="Proc. Natl. Acad. Sci. U.S.A.">
        <title>Structure of the gene for the liver cell adhesion molecule, L-CAM.</title>
        <authorList>
            <person name="Sorkin B.C."/>
            <person name="Hemperly J.J."/>
            <person name="Edelman G.M."/>
            <person name="Cunningham B.A."/>
        </authorList>
    </citation>
    <scope>NUCLEOTIDE SEQUENCE [GENOMIC DNA / MRNA]</scope>
</reference>
<reference key="2">
    <citation type="journal article" date="1987" name="Proc. Natl. Acad. Sci. U.S.A.">
        <title>Sequence analysis of a cDNA clone encoding the liver cell adhesion molecule, L-CAM.</title>
        <authorList>
            <person name="Gallin W.J."/>
            <person name="Sorkin B.C."/>
            <person name="Edelman G.M."/>
            <person name="Cunningham B.A."/>
        </authorList>
    </citation>
    <scope>NUCLEOTIDE SEQUENCE [MRNA] OF 51-887</scope>
    <scope>PARTIAL PROTEIN SEQUENCE</scope>
    <scope>TISSUE SPECIFICITY</scope>
    <scope>GLYCOSYLATION AT ASN-291; ASN-346; ASN-564 AND ASN-643</scope>
</reference>
<reference key="3">
    <citation type="journal article" date="1992" name="Cell">
        <title>Identification of a neural alpha-catenin as a key regulator of cadherin function and multicellular organization.</title>
        <authorList>
            <person name="Hirano S."/>
            <person name="Kimoto N."/>
            <person name="Shimoyama Y."/>
            <person name="Hirohashi S."/>
            <person name="Takeichi M."/>
        </authorList>
    </citation>
    <scope>INTERACTION WITH CTNNA2</scope>
    <source>
        <tissue>Embryonic brain</tissue>
    </source>
</reference>
<feature type="signal peptide" evidence="5">
    <location>
        <begin position="1"/>
        <end position="26"/>
    </location>
</feature>
<feature type="propeptide" id="PRO_0000003721">
    <location>
        <begin position="27"/>
        <end position="160"/>
    </location>
</feature>
<feature type="chain" id="PRO_0000003722" description="Cadherin-1">
    <location>
        <begin position="161"/>
        <end position="887"/>
    </location>
</feature>
<feature type="topological domain" description="Extracellular" evidence="5">
    <location>
        <begin position="161"/>
        <end position="714"/>
    </location>
</feature>
<feature type="transmembrane region" description="Helical" evidence="5">
    <location>
        <begin position="715"/>
        <end position="735"/>
    </location>
</feature>
<feature type="topological domain" description="Cytoplasmic" evidence="5">
    <location>
        <begin position="736"/>
        <end position="887"/>
    </location>
</feature>
<feature type="domain" description="Cadherin 1" evidence="6">
    <location>
        <begin position="161"/>
        <end position="268"/>
    </location>
</feature>
<feature type="domain" description="Cadherin 2" evidence="6">
    <location>
        <begin position="269"/>
        <end position="381"/>
    </location>
</feature>
<feature type="domain" description="Cadherin 3" evidence="6">
    <location>
        <begin position="382"/>
        <end position="493"/>
    </location>
</feature>
<feature type="domain" description="Cadherin 4" evidence="6">
    <location>
        <begin position="494"/>
        <end position="599"/>
    </location>
</feature>
<feature type="domain" description="Cadherin 5" evidence="6">
    <location>
        <begin position="600"/>
        <end position="704"/>
    </location>
</feature>
<feature type="region of interest" description="Disordered" evidence="7">
    <location>
        <begin position="745"/>
        <end position="770"/>
    </location>
</feature>
<feature type="compositionally biased region" description="Acidic residues" evidence="7">
    <location>
        <begin position="759"/>
        <end position="770"/>
    </location>
</feature>
<feature type="binding site" evidence="1">
    <location>
        <position position="263"/>
    </location>
    <ligand>
        <name>Ca(2+)</name>
        <dbReference type="ChEBI" id="CHEBI:29108"/>
        <label>1</label>
    </ligand>
</feature>
<feature type="binding site" evidence="1">
    <location>
        <position position="263"/>
    </location>
    <ligand>
        <name>Ca(2+)</name>
        <dbReference type="ChEBI" id="CHEBI:29108"/>
        <label>2</label>
    </ligand>
</feature>
<feature type="binding site" evidence="1">
    <location>
        <position position="294"/>
    </location>
    <ligand>
        <name>Ca(2+)</name>
        <dbReference type="ChEBI" id="CHEBI:29108"/>
        <label>3</label>
    </ligand>
</feature>
<feature type="glycosylation site" description="N-linked (GlcNAc...) asparagine" evidence="9">
    <location>
        <position position="291"/>
    </location>
</feature>
<feature type="glycosylation site" description="N-linked (GlcNAc...) asparagine" evidence="9">
    <location>
        <position position="346"/>
    </location>
</feature>
<feature type="glycosylation site" description="N-linked (GlcNAc...) asparagine" evidence="9">
    <location>
        <position position="564"/>
    </location>
</feature>
<feature type="glycosylation site" description="N-linked (GlcNAc...) asparagine" evidence="9">
    <location>
        <position position="643"/>
    </location>
</feature>
<feature type="sequence conflict" description="In Ref. 1; AAA82572." evidence="11" ref="1">
    <original>T</original>
    <variation>M</variation>
    <location>
        <position position="140"/>
    </location>
</feature>
<proteinExistence type="evidence at protein level"/>
<comment type="function">
    <text evidence="2">Cadherins are calcium-dependent cell adhesion proteins. They preferentially interact with themselves in a homophilic manner in connecting cells; cadherins may thus contribute to the sorting of heterogeneous cell types. Promotes organization of radial actin fiber structure and cellular response to contractile forces, via anchoring of radial actin fibers to CDH1 junction complexes at the cell membrane (By similarity). E-cadherin is a ligand for integrin alpha-E/beta-7.</text>
</comment>
<comment type="subunit">
    <text evidence="8">Homodimer. Interacts with CTNNA2.</text>
</comment>
<comment type="subcellular location">
    <subcellularLocation>
        <location evidence="3">Cell junction</location>
        <location evidence="3">Adherens junction</location>
    </subcellularLocation>
    <subcellularLocation>
        <location evidence="5">Cell membrane</location>
        <topology evidence="5">Single-pass type I membrane protein</topology>
    </subcellularLocation>
    <subcellularLocation>
        <location evidence="4">Endosome</location>
    </subcellularLocation>
    <subcellularLocation>
        <location evidence="4">Golgi apparatus</location>
        <location evidence="4">trans-Golgi network</location>
    </subcellularLocation>
    <subcellularLocation>
        <location evidence="3">Cytoplasm</location>
    </subcellularLocation>
    <subcellularLocation>
        <location evidence="4">Cell junction</location>
        <location evidence="4">Desmosome</location>
    </subcellularLocation>
</comment>
<comment type="tissue specificity">
    <text evidence="9">Expressed in the liver.</text>
</comment>
<comment type="domain">
    <text evidence="4">Three calcium ions are usually bound at the interface of each cadherin domain and strengthen the connections, imparting a strong curvature to the full-length ectodomain.</text>
</comment>
<evidence type="ECO:0000250" key="1"/>
<evidence type="ECO:0000250" key="2">
    <source>
        <dbReference type="UniProtKB" id="F1PAA9"/>
    </source>
</evidence>
<evidence type="ECO:0000250" key="3">
    <source>
        <dbReference type="UniProtKB" id="P09803"/>
    </source>
</evidence>
<evidence type="ECO:0000250" key="4">
    <source>
        <dbReference type="UniProtKB" id="P12830"/>
    </source>
</evidence>
<evidence type="ECO:0000255" key="5"/>
<evidence type="ECO:0000255" key="6">
    <source>
        <dbReference type="PROSITE-ProRule" id="PRU00043"/>
    </source>
</evidence>
<evidence type="ECO:0000256" key="7">
    <source>
        <dbReference type="SAM" id="MobiDB-lite"/>
    </source>
</evidence>
<evidence type="ECO:0000269" key="8">
    <source>
    </source>
</evidence>
<evidence type="ECO:0000269" key="9">
    <source>
    </source>
</evidence>
<evidence type="ECO:0000303" key="10">
    <source>
    </source>
</evidence>
<evidence type="ECO:0000305" key="11"/>
<organism>
    <name type="scientific">Gallus gallus</name>
    <name type="common">Chicken</name>
    <dbReference type="NCBI Taxonomy" id="9031"/>
    <lineage>
        <taxon>Eukaryota</taxon>
        <taxon>Metazoa</taxon>
        <taxon>Chordata</taxon>
        <taxon>Craniata</taxon>
        <taxon>Vertebrata</taxon>
        <taxon>Euteleostomi</taxon>
        <taxon>Archelosauria</taxon>
        <taxon>Archosauria</taxon>
        <taxon>Dinosauria</taxon>
        <taxon>Saurischia</taxon>
        <taxon>Theropoda</taxon>
        <taxon>Coelurosauria</taxon>
        <taxon>Aves</taxon>
        <taxon>Neognathae</taxon>
        <taxon>Galloanserae</taxon>
        <taxon>Galliformes</taxon>
        <taxon>Phasianidae</taxon>
        <taxon>Phasianinae</taxon>
        <taxon>Gallus</taxon>
    </lineage>
</organism>
<name>CADH1_CHICK</name>
<sequence length="887" mass="97783">MGRRWGSPALQRFPVLVLLLLLQVCGRRCDEAAPCQPGFAAETFSFSVPQDSVAAGRELGRVSFAACSGRPWAVYVPTDTRFKVNGDGVVSTKRPLTLYGRKISFTIYAQDAMGKRHSARVTVGRHRHRRHHHNHHLQDTTPAVLTFPKHDPGFLRRQKRDWVIPPISCLENHRGPYPMRLVQIKSNKDKESKVYYSITGQGADSPPVGIFIIERETGWLEVTEQLDREKIDRYTLLSHAVSASGQPVEDPMEIIITVMDQNDNKPVFIKEVFVGYIEENAKPGTSVMTVNATDADDAVNTDNGIVSYSIVSQQPPRPHPQMFTIDPAKGIISVLGTGLDRETTPNYTLIVQATDQEGKGLSNTATAIIEVTDANDNIPIFNPTMYEGVVEENKPGTEVARLTVTDQDAPGSPAWQAVYHIKSGNLDGAFSIITDPSTNNGILKTAKGLDYETKSRYDLVVTVENKVPLSVPITLSTASVLVTVLDVNEPPVFVPPIKRVGVPEDLPVGQQVTSYTAQDPDRDMRQKITYRMGSDPAGWLYIHPENGIVTATQPLDRESVHAINSTYKAIILAVDNGIPDTTGTGTLLLLLQDVNDNGPTPEPRSFEICSRQPEKQILSIVDKDLPPHTYPFKAALEHGSSNNWTVEIRGQDELAMGLKKELEPGEYNIFVKLTDSQGKAQVTQVKAQVCECEGTAKNCERRSYIVGGLGVPAILGILGGILALLILLLLLLLFARRRKVEKEPLLPPEDDMRDNVYNYDEEGGGEEDQDYDLSQLHRGLDARPEVIRNDVAPPLMAAPQYRPRPANPDEIGNFIDENLKAADTDPTAPPYDSLLVFDYEGGGSEATSLSSLNSSASDQDQDYDYLNEWGNRFKKLAELYGGGEDDE</sequence>